<protein>
    <recommendedName>
        <fullName>Beta-2-glycoprotein 1</fullName>
    </recommendedName>
    <alternativeName>
        <fullName>Apolipoprotein H</fullName>
        <shortName>Apo-H</shortName>
    </alternativeName>
    <alternativeName>
        <fullName>Beta-2-glycoprotein I</fullName>
        <shortName>B2GPI</shortName>
        <shortName>Beta(2)GPI</shortName>
    </alternativeName>
</protein>
<sequence>MPPPALVLLLGFLCHVAIAGRTCPKPDELPFSTVVPLKRTYEPGEQIVFSCQPGYVSRGGIRRFTCPLTGLWPINTLKCMPRVCPFAGILENGTVRYTTFEYPNTISFSCHTGFYLKGASSAKCTEEGKWSPDLPVCAPITCPPPPIPKFASLSVYKPLAGNNSFYGSKAVFKCLPHHAMFGNDTVTCTEHGNWTQLPECREVRCPFPSRPDNGFVNHPANPVLYYKDTATFGCHETYSLDGPEEVECSKFGNWSAQPSCKASCKLSIKRATVIYEGERVAIQNKFKNGMLHGQKVSFFCKHKEKKCSYTEDAQCIDGTIEIPKCFKEHSSLAFWKTDASDVKPC</sequence>
<evidence type="ECO:0000255" key="1">
    <source>
        <dbReference type="PROSITE-ProRule" id="PRU00302"/>
    </source>
</evidence>
<evidence type="ECO:0000269" key="2">
    <source>
    </source>
</evidence>
<evidence type="ECO:0000269" key="3">
    <source>
    </source>
</evidence>
<evidence type="ECO:0000269" key="4">
    <source>
    </source>
</evidence>
<evidence type="ECO:0000269" key="5">
    <source>
    </source>
</evidence>
<evidence type="ECO:0000305" key="6"/>
<accession>P17690</accession>
<accession>Q148G1</accession>
<accession>Q28052</accession>
<organism>
    <name type="scientific">Bos taurus</name>
    <name type="common">Bovine</name>
    <dbReference type="NCBI Taxonomy" id="9913"/>
    <lineage>
        <taxon>Eukaryota</taxon>
        <taxon>Metazoa</taxon>
        <taxon>Chordata</taxon>
        <taxon>Craniata</taxon>
        <taxon>Vertebrata</taxon>
        <taxon>Euteleostomi</taxon>
        <taxon>Mammalia</taxon>
        <taxon>Eutheria</taxon>
        <taxon>Laurasiatheria</taxon>
        <taxon>Artiodactyla</taxon>
        <taxon>Ruminantia</taxon>
        <taxon>Pecora</taxon>
        <taxon>Bovidae</taxon>
        <taxon>Bovinae</taxon>
        <taxon>Bos</taxon>
    </lineage>
</organism>
<gene>
    <name type="primary">APOH</name>
</gene>
<comment type="function">
    <text>Binds to various kinds of negatively charged substances such as heparin, phospholipids, and dextran sulfate. May prevent activation of the intrinsic blood coagulation cascade by binding to phospholipids on the surface of damaged cells.</text>
</comment>
<comment type="subcellular location">
    <subcellularLocation>
        <location>Secreted</location>
    </subcellularLocation>
</comment>
<comment type="tissue specificity">
    <text>Expressed by the liver and secreted in plasma.</text>
</comment>
<name>APOH_BOVIN</name>
<reference key="1">
    <citation type="submission" date="1992-12" db="EMBL/GenBank/DDBJ databases">
        <authorList>
            <person name="Gao B."/>
            <person name="Virmani M."/>
            <person name="Romm E."/>
            <person name="Lazar-Wesley E."/>
            <person name="Sakaguchi K."/>
            <person name="Appella E."/>
            <person name="Kunos G."/>
            <person name="Takacs L."/>
        </authorList>
    </citation>
    <scope>NUCLEOTIDE SEQUENCE [MRNA]</scope>
    <source>
        <tissue>Liver</tissue>
    </source>
</reference>
<reference key="2">
    <citation type="submission" date="2006-06" db="EMBL/GenBank/DDBJ databases">
        <authorList>
            <consortium name="NIH - Mammalian Gene Collection (MGC) project"/>
        </authorList>
    </citation>
    <scope>NUCLEOTIDE SEQUENCE [LARGE SCALE MRNA]</scope>
    <source>
        <strain>Hereford</strain>
        <tissue>Fetal liver</tissue>
    </source>
</reference>
<reference key="3">
    <citation type="journal article" date="1992" name="Biochemistry">
        <title>Complete primary structure of bovine beta 2-glycoprotein I: localization of the disulfide bridges.</title>
        <authorList>
            <person name="Bendixen E."/>
            <person name="Halkier T."/>
            <person name="Magnusson S."/>
            <person name="Sottrup-Jensen L."/>
            <person name="Kristensen T."/>
        </authorList>
    </citation>
    <scope>NUCLEOTIDE SEQUENCE [MRNA] OF 4-345</scope>
    <scope>PARTIAL PROTEIN SEQUENCE</scope>
    <scope>DISULFIDE BONDS</scope>
    <source>
        <tissue>Liver</tissue>
    </source>
</reference>
<reference key="4">
    <citation type="journal article" date="1991" name="Biochemistry">
        <title>Amino acid sequence and location of the disulfide bonds in bovine beta 2 glycoprotein I: the presence of five Sushi domains.</title>
        <authorList>
            <person name="Kato H."/>
            <person name="Enjyoji K."/>
        </authorList>
    </citation>
    <scope>PROTEIN SEQUENCE OF 20-345</scope>
    <scope>GLYCOSYLATION AT ASN-92; ASN-162; ASN-183; ASN-193 AND ASN-253</scope>
    <scope>DISULFIDE BONDS</scope>
    <source>
        <tissue>Plasma</tissue>
    </source>
</reference>
<reference key="5">
    <citation type="journal article" date="1990" name="Biochem. J.">
        <title>Isolation from fetal bovine serum of an apolipoprotein-H-like protein which inhibits thymidine incorporation in fetal calf erythroid cells.</title>
        <authorList>
            <person name="Li Q."/>
            <person name="Blacher R."/>
            <person name="Esch F."/>
            <person name="Congote L.F."/>
        </authorList>
    </citation>
    <scope>PROTEIN SEQUENCE OF 20-41</scope>
</reference>
<reference key="6">
    <citation type="journal article" date="2009" name="Mol. Cell. Proteomics">
        <title>Affinity enrichment and characterization of mucin core-1 type glycopeptides from bovine serum.</title>
        <authorList>
            <person name="Darula Z."/>
            <person name="Medzihradszky K.F."/>
        </authorList>
    </citation>
    <scope>GLYCOSYLATION AT THR-33</scope>
    <scope>IDENTIFICATION BY MASS SPECTROMETRY</scope>
</reference>
<feature type="signal peptide" evidence="3 5">
    <location>
        <begin position="1"/>
        <end position="19"/>
    </location>
</feature>
<feature type="chain" id="PRO_0000002057" description="Beta-2-glycoprotein 1" evidence="2">
    <location>
        <begin position="20"/>
        <end position="345"/>
    </location>
</feature>
<feature type="domain" description="Sushi 1" evidence="1">
    <location>
        <begin position="21"/>
        <end position="81"/>
    </location>
</feature>
<feature type="domain" description="Sushi 2" evidence="1">
    <location>
        <begin position="82"/>
        <end position="139"/>
    </location>
</feature>
<feature type="domain" description="Sushi 3" evidence="1">
    <location>
        <begin position="140"/>
        <end position="202"/>
    </location>
</feature>
<feature type="domain" description="Sushi 4" evidence="1">
    <location>
        <begin position="203"/>
        <end position="262"/>
    </location>
</feature>
<feature type="region of interest" description="Sushi-like">
    <location>
        <begin position="263"/>
        <end position="345"/>
    </location>
</feature>
<feature type="glycosylation site" description="O-linked (GalNAc...) threonine" evidence="4">
    <location>
        <position position="33"/>
    </location>
</feature>
<feature type="glycosylation site" description="N-linked (GlcNAc...) asparagine" evidence="2 3">
    <location>
        <position position="92"/>
    </location>
</feature>
<feature type="glycosylation site" description="N-linked (GlcNAc...) asparagine" evidence="2 3">
    <location>
        <position position="162"/>
    </location>
</feature>
<feature type="glycosylation site" description="N-linked (GlcNAc...) asparagine" evidence="2 3">
    <location>
        <position position="183"/>
    </location>
</feature>
<feature type="glycosylation site" description="N-linked (GlcNAc...) asparagine" evidence="2 3">
    <location>
        <position position="193"/>
    </location>
</feature>
<feature type="glycosylation site" description="N-linked (GlcNAc...) asparagine" evidence="2 3">
    <location>
        <position position="253"/>
    </location>
</feature>
<feature type="disulfide bond" evidence="1 2">
    <location>
        <begin position="23"/>
        <end position="66"/>
    </location>
</feature>
<feature type="disulfide bond" evidence="1 2">
    <location>
        <begin position="51"/>
        <end position="79"/>
    </location>
</feature>
<feature type="disulfide bond" evidence="1 2">
    <location>
        <begin position="84"/>
        <end position="124"/>
    </location>
</feature>
<feature type="disulfide bond" evidence="1 2">
    <location>
        <begin position="110"/>
        <end position="137"/>
    </location>
</feature>
<feature type="disulfide bond" evidence="1 2">
    <location>
        <begin position="142"/>
        <end position="188"/>
    </location>
</feature>
<feature type="disulfide bond" evidence="1 2">
    <location>
        <begin position="174"/>
        <end position="200"/>
    </location>
</feature>
<feature type="disulfide bond" evidence="1 2">
    <location>
        <begin position="205"/>
        <end position="248"/>
    </location>
</feature>
<feature type="disulfide bond" evidence="1 2">
    <location>
        <begin position="234"/>
        <end position="260"/>
    </location>
</feature>
<feature type="disulfide bond" evidence="1 2">
    <location>
        <begin position="264"/>
        <end position="315"/>
    </location>
</feature>
<feature type="disulfide bond" evidence="1 2">
    <location>
        <begin position="300"/>
        <end position="325"/>
    </location>
</feature>
<feature type="disulfide bond" evidence="1 2">
    <location>
        <begin position="307"/>
        <end position="345"/>
    </location>
</feature>
<feature type="sequence conflict" description="In Ref. 2; AAI18365." evidence="6" ref="2">
    <original>P</original>
    <variation>L</variation>
    <location>
        <position position="2"/>
    </location>
</feature>
<feature type="sequence conflict" description="In Ref. 1; AAA30382." evidence="6" ref="1">
    <original>E</original>
    <variation>G</variation>
    <location>
        <position position="101"/>
    </location>
</feature>
<feature type="sequence conflict" description="In Ref. 1; AAA30382." evidence="6" ref="1">
    <original>F</original>
    <variation>S</variation>
    <location>
        <position position="108"/>
    </location>
</feature>
<feature type="sequence conflict" description="In Ref. 1; AAA30382." evidence="6" ref="1">
    <original>H</original>
    <variation>R</variation>
    <location>
        <position position="177"/>
    </location>
</feature>
<feature type="sequence conflict" description="In Ref. 4; AA sequence." evidence="6" ref="4">
    <original>H</original>
    <variation>N</variation>
    <location>
        <position position="191"/>
    </location>
</feature>
<feature type="sequence conflict" description="In Ref. 1; AAA30382." evidence="6" ref="1">
    <original>W</original>
    <variation>C</variation>
    <location>
        <position position="194"/>
    </location>
</feature>
<feature type="sequence conflict" description="In Ref. 1; AAA30382." evidence="6" ref="1">
    <original>S</original>
    <variation>N</variation>
    <location>
        <position position="259"/>
    </location>
</feature>
<feature type="sequence conflict" description="In Ref. 1; AAA30382 and 2; AAI18365." evidence="6" ref="1 2">
    <original>H</original>
    <variation>N</variation>
    <location>
        <position position="302"/>
    </location>
</feature>
<feature type="sequence conflict" description="In Ref. 1; AAA30382." evidence="6" ref="1">
    <original>K</original>
    <variation>R</variation>
    <location>
        <position position="305"/>
    </location>
</feature>
<feature type="sequence conflict" description="In Ref. 1; AAA30382." evidence="6" ref="1">
    <original>H</original>
    <variation>R</variation>
    <location>
        <position position="329"/>
    </location>
</feature>
<dbReference type="EMBL" id="L07303">
    <property type="protein sequence ID" value="AAA30382.1"/>
    <property type="molecule type" value="mRNA"/>
</dbReference>
<dbReference type="EMBL" id="BC118364">
    <property type="protein sequence ID" value="AAI18365.1"/>
    <property type="molecule type" value="mRNA"/>
</dbReference>
<dbReference type="EMBL" id="X60065">
    <property type="protein sequence ID" value="CAA42669.1"/>
    <property type="molecule type" value="mRNA"/>
</dbReference>
<dbReference type="PIR" id="JN0502">
    <property type="entry name" value="NBBO"/>
</dbReference>
<dbReference type="RefSeq" id="NP_776417.1">
    <property type="nucleotide sequence ID" value="NM_173992.2"/>
</dbReference>
<dbReference type="SMR" id="P17690"/>
<dbReference type="FunCoup" id="P17690">
    <property type="interactions" value="196"/>
</dbReference>
<dbReference type="STRING" id="9913.ENSBTAP00000002492"/>
<dbReference type="GlyConnect" id="756">
    <property type="glycosylation" value="1 O-Linked glycan (1 site)"/>
</dbReference>
<dbReference type="GlyCosmos" id="P17690">
    <property type="glycosylation" value="6 sites, 1 glycan"/>
</dbReference>
<dbReference type="GlyGen" id="P17690">
    <property type="glycosylation" value="6 sites, 1 O-linked glycan (1 site)"/>
</dbReference>
<dbReference type="iPTMnet" id="P17690"/>
<dbReference type="PaxDb" id="9913-ENSBTAP00000002492"/>
<dbReference type="PeptideAtlas" id="P17690"/>
<dbReference type="GeneID" id="281006"/>
<dbReference type="KEGG" id="bta:281006"/>
<dbReference type="CTD" id="350"/>
<dbReference type="eggNOG" id="KOG4297">
    <property type="taxonomic scope" value="Eukaryota"/>
</dbReference>
<dbReference type="HOGENOM" id="CLU_020107_2_0_1"/>
<dbReference type="InParanoid" id="P17690"/>
<dbReference type="OrthoDB" id="6103690at2759"/>
<dbReference type="TreeFam" id="TF334137"/>
<dbReference type="Proteomes" id="UP000009136">
    <property type="component" value="Unplaced"/>
</dbReference>
<dbReference type="GO" id="GO:0005576">
    <property type="term" value="C:extracellular region"/>
    <property type="evidence" value="ECO:0007669"/>
    <property type="project" value="UniProtKB-SubCell"/>
</dbReference>
<dbReference type="GO" id="GO:0008201">
    <property type="term" value="F:heparin binding"/>
    <property type="evidence" value="ECO:0007669"/>
    <property type="project" value="UniProtKB-KW"/>
</dbReference>
<dbReference type="CDD" id="cd00033">
    <property type="entry name" value="CCP"/>
    <property type="match status" value="4"/>
</dbReference>
<dbReference type="FunFam" id="2.10.70.10:FF:000089">
    <property type="entry name" value="Beta-2-glycoprotein 1"/>
    <property type="match status" value="1"/>
</dbReference>
<dbReference type="FunFam" id="2.10.70.10:FF:000122">
    <property type="entry name" value="Beta-2-glycoprotein 1"/>
    <property type="match status" value="1"/>
</dbReference>
<dbReference type="Gene3D" id="2.10.70.10">
    <property type="entry name" value="Complement Module, domain 1"/>
    <property type="match status" value="5"/>
</dbReference>
<dbReference type="InterPro" id="IPR035976">
    <property type="entry name" value="Sushi/SCR/CCP_sf"/>
</dbReference>
<dbReference type="InterPro" id="IPR015104">
    <property type="entry name" value="Sushi_2"/>
</dbReference>
<dbReference type="InterPro" id="IPR000436">
    <property type="entry name" value="Sushi_SCR_CCP_dom"/>
</dbReference>
<dbReference type="PANTHER" id="PTHR46393:SF7">
    <property type="entry name" value="COMPLEMENT C2"/>
    <property type="match status" value="1"/>
</dbReference>
<dbReference type="PANTHER" id="PTHR46393">
    <property type="entry name" value="SUSHI DOMAIN-CONTAINING PROTEIN"/>
    <property type="match status" value="1"/>
</dbReference>
<dbReference type="Pfam" id="PF00084">
    <property type="entry name" value="Sushi"/>
    <property type="match status" value="4"/>
</dbReference>
<dbReference type="Pfam" id="PF09014">
    <property type="entry name" value="Sushi_2"/>
    <property type="match status" value="1"/>
</dbReference>
<dbReference type="SMART" id="SM00032">
    <property type="entry name" value="CCP"/>
    <property type="match status" value="4"/>
</dbReference>
<dbReference type="SUPFAM" id="SSF57535">
    <property type="entry name" value="Complement control module/SCR domain"/>
    <property type="match status" value="5"/>
</dbReference>
<dbReference type="PROSITE" id="PS50923">
    <property type="entry name" value="SUSHI"/>
    <property type="match status" value="4"/>
</dbReference>
<proteinExistence type="evidence at protein level"/>
<keyword id="KW-0903">Direct protein sequencing</keyword>
<keyword id="KW-1015">Disulfide bond</keyword>
<keyword id="KW-0325">Glycoprotein</keyword>
<keyword id="KW-0358">Heparin-binding</keyword>
<keyword id="KW-1185">Reference proteome</keyword>
<keyword id="KW-0677">Repeat</keyword>
<keyword id="KW-0964">Secreted</keyword>
<keyword id="KW-0732">Signal</keyword>
<keyword id="KW-0768">Sushi</keyword>